<gene>
    <name type="primary">MELT</name>
</gene>
<comment type="function">
    <text evidence="6 7 9 10 11 12 13 15 18 19 20 21">Melittin: Main toxin of bee venom with strong antimicrobial activity and hemolytic activity (PubMed:24512991, PubMed:4057243, PubMed:5139482, PubMed:5794226). It has enhancing effects on bee venom phospholipase A2 activity (PubMed:4371280). This amphipathic toxin binds to negatively charged membrane surface and forms pore by inserting into lipid bilayers inducing the leakage of ions and molecules and the enhancement of permeability that ultimately leads to cell lysis (PubMed:3666135, PubMed:4057243, PubMed:6830776). It acts as a voltage-gated pore with higher selectivity for anions over cations (PubMed:6269667). The ion conductance has been shown to be voltage-dependent (PubMed:7061434). Self-association of melittin in membranes is promoted by high ionic strength, but not by the presence of negatively charged lipids (PubMed:3443079). In vivo, intradermal injection into healthy human volunteers produce sharp pain sensation and an inflammatory response (PubMed:26983715). It produces pain by activating primary nociceptor cells directly and indirectly due to its ability to activate plasma membrane phospholipase A2 and its pore-forming activity (PubMed:26983715). In the context of inflammation and cancer tests, is highly cytotoxic to normal cells, highly induces calcium signaling and almost completely prevents cAMP production (PubMed:36548715). In addition, prevents LPS-induced nitric oxid (NO) synthesis but does not affect the IP3 signaling and pro-inflammatory activation of endothelial cells (PubMed:36548715). Also shows significant antiproliferative activity on the breast cancer cell line MDA-MB-231 (PubMed:36548715).</text>
</comment>
<comment type="function">
    <text evidence="4">Melittin-S: 1.4-fold less hemolytic and adopts a less organized secondary structure than melittin.</text>
</comment>
<comment type="function">
    <text evidence="30">Melittin-2: Has strong hemolytic activity (PubMed:5139482).</text>
</comment>
<comment type="subunit">
    <text evidence="2 14 19 20 22">Monomer (in solution and for integration into membranes), homotetramer (in solution and potentially as a toroidal pore in membranes), and potenially homomultimer (as a toroidal pore in membranes).</text>
</comment>
<comment type="subcellular location">
    <subcellularLocation>
        <location evidence="3 4 17">Secreted</location>
    </subcellularLocation>
    <subcellularLocation>
        <location evidence="2 14 19">Target cell membrane</location>
    </subcellularLocation>
    <text evidence="2 3 4 14 17 19">Alpha-helical peptides form toroidal pores in the prey.</text>
</comment>
<comment type="tissue specificity">
    <text evidence="25">Expressed by the venom gland.</text>
</comment>
<comment type="allergen">
    <text evidence="23">Causes an allergic reaction in human.</text>
</comment>
<comment type="toxic dose">
    <text>LD(50) is 2.7 ug/ml against killifish.</text>
</comment>
<comment type="pharmaceutical">
    <text evidence="28">Melittin is an attractive candidate for cancer chemotherapy causing more damage to the tumor cell membranes since its membrane potential is higher and cells are less likely to develop resistance to a membrane pore formation. Despite this potential applicability of melittin, its rapid degradation in the blood and its non-specific cellular lytic activity -including hemolysis- poses significant challenges. However, melittin and/or its conjugates can work in conjunction with hormone receptors, gene therapy or as nanoparticles for targeted therapies of some cancer types.</text>
</comment>
<comment type="miscellaneous">
    <text evidence="16">N-formyl-melittin major has 80% of the activity of melittin.</text>
</comment>
<comment type="miscellaneous">
    <text evidence="3">Melittin: The secretion of this protein into venom follows a seasonal pattern. This variation is synchronized with phospholipase A2 variation, i.e. their production increase in the same months.</text>
</comment>
<comment type="miscellaneous">
    <text evidence="4">Melittin-S: The secretion of this protein into venom follows a seasonal pattern, the maximum secretion occurring during the (southern) winter months.</text>
</comment>
<comment type="miscellaneous">
    <text evidence="22">Exists in two forms, due to cis-trans isomerization at 56-Leu-Pro-57. The trans conformation is the major form. The trans conformation is required for an alpha-helix.</text>
</comment>
<comment type="miscellaneous">
    <text evidence="29">The derivative MelP5 is amidated.</text>
</comment>
<comment type="similarity">
    <text evidence="25">Belongs to the melittin family.</text>
</comment>
<comment type="online information" name="Protein Spotlight">
    <link uri="https://www.proteinspotlight.org/back_issues/012"/>
    <text>Why Pooh luvvs hunny - Issue 12 of July 2001</text>
</comment>
<comment type="online information" name="Wikipedia">
    <link uri="https://en.wikipedia.org/wiki/Melittin"/>
    <text>Melittin entry</text>
</comment>
<accession>P01501</accession>
<accession>I1VC84</accession>
<accession>P01503</accession>
<protein>
    <recommendedName>
        <fullName evidence="24">Melittin</fullName>
        <shortName>MEL</shortName>
        <shortName>MLT</shortName>
    </recommendedName>
    <alternativeName>
        <fullName evidence="25">Allergen Api m 3</fullName>
    </alternativeName>
    <alternativeName>
        <fullName evidence="25">Allergen Api m III</fullName>
    </alternativeName>
    <allergenName evidence="25">Api m 4</allergenName>
</protein>
<evidence type="ECO:0000255" key="1"/>
<evidence type="ECO:0000269" key="2">
    <source>
    </source>
</evidence>
<evidence type="ECO:0000269" key="3">
    <source>
    </source>
</evidence>
<evidence type="ECO:0000269" key="4">
    <source>
    </source>
</evidence>
<evidence type="ECO:0000269" key="5">
    <source>
    </source>
</evidence>
<evidence type="ECO:0000269" key="6">
    <source>
    </source>
</evidence>
<evidence type="ECO:0000269" key="7">
    <source>
    </source>
</evidence>
<evidence type="ECO:0000269" key="8">
    <source>
    </source>
</evidence>
<evidence type="ECO:0000269" key="9">
    <source>
    </source>
</evidence>
<evidence type="ECO:0000269" key="10">
    <source>
    </source>
</evidence>
<evidence type="ECO:0000269" key="11">
    <source>
    </source>
</evidence>
<evidence type="ECO:0000269" key="12">
    <source>
    </source>
</evidence>
<evidence type="ECO:0000269" key="13">
    <source>
    </source>
</evidence>
<evidence type="ECO:0000269" key="14">
    <source>
    </source>
</evidence>
<evidence type="ECO:0000269" key="15">
    <source>
    </source>
</evidence>
<evidence type="ECO:0000269" key="16">
    <source>
    </source>
</evidence>
<evidence type="ECO:0000269" key="17">
    <source>
    </source>
</evidence>
<evidence type="ECO:0000269" key="18">
    <source>
    </source>
</evidence>
<evidence type="ECO:0000269" key="19">
    <source>
    </source>
</evidence>
<evidence type="ECO:0000269" key="20">
    <source>
    </source>
</evidence>
<evidence type="ECO:0000269" key="21">
    <source>
    </source>
</evidence>
<evidence type="ECO:0000269" key="22">
    <source>
    </source>
</evidence>
<evidence type="ECO:0000269" key="23">
    <source>
    </source>
</evidence>
<evidence type="ECO:0000303" key="24">
    <source>
    </source>
</evidence>
<evidence type="ECO:0000305" key="25"/>
<evidence type="ECO:0000305" key="26">
    <source>
    </source>
</evidence>
<evidence type="ECO:0000305" key="27">
    <source>
    </source>
</evidence>
<evidence type="ECO:0000305" key="28">
    <source>
    </source>
</evidence>
<evidence type="ECO:0000305" key="29">
    <source>
    </source>
</evidence>
<evidence type="ECO:0000305" key="30">
    <source>
    </source>
</evidence>
<evidence type="ECO:0000305" key="31">
    <source>
    </source>
</evidence>
<evidence type="ECO:0007829" key="32">
    <source>
        <dbReference type="PDB" id="6O4M"/>
    </source>
</evidence>
<proteinExistence type="evidence at protein level"/>
<organism>
    <name type="scientific">Apis mellifera</name>
    <name type="common">Honeybee</name>
    <dbReference type="NCBI Taxonomy" id="7460"/>
    <lineage>
        <taxon>Eukaryota</taxon>
        <taxon>Metazoa</taxon>
        <taxon>Ecdysozoa</taxon>
        <taxon>Arthropoda</taxon>
        <taxon>Hexapoda</taxon>
        <taxon>Insecta</taxon>
        <taxon>Pterygota</taxon>
        <taxon>Neoptera</taxon>
        <taxon>Endopterygota</taxon>
        <taxon>Hymenoptera</taxon>
        <taxon>Apocrita</taxon>
        <taxon>Aculeata</taxon>
        <taxon>Apoidea</taxon>
        <taxon>Anthophila</taxon>
        <taxon>Apidae</taxon>
        <taxon>Apis</taxon>
    </lineage>
</organism>
<sequence>MKFLVNVALVFMVVYISYIYAAPEPEPAPEPEAEADAEADPEAGIGAVLKVLTTGLPALISWIKRKRQQG</sequence>
<dbReference type="EMBL" id="X02007">
    <property type="protein sequence ID" value="CAA26038.1"/>
    <property type="molecule type" value="mRNA"/>
</dbReference>
<dbReference type="EMBL" id="JQ900378">
    <property type="protein sequence ID" value="AFI40556.1"/>
    <property type="molecule type" value="mRNA"/>
</dbReference>
<dbReference type="PIR" id="A91133">
    <property type="entry name" value="MPHB1"/>
</dbReference>
<dbReference type="RefSeq" id="NP_001011607.1">
    <property type="nucleotide sequence ID" value="NM_001011607.1"/>
</dbReference>
<dbReference type="PDB" id="1BH1">
    <property type="method" value="NMR"/>
    <property type="chains" value="A=44-69"/>
</dbReference>
<dbReference type="PDB" id="2MLT">
    <property type="method" value="X-ray"/>
    <property type="resolution" value="2.00 A"/>
    <property type="chains" value="A/B=44-69"/>
</dbReference>
<dbReference type="PDB" id="2MW6">
    <property type="method" value="NMR"/>
    <property type="chains" value="A=44-69"/>
</dbReference>
<dbReference type="PDB" id="3QRX">
    <property type="method" value="X-ray"/>
    <property type="resolution" value="2.20 A"/>
    <property type="chains" value="B=44-69"/>
</dbReference>
<dbReference type="PDB" id="6DST">
    <property type="method" value="NMR"/>
    <property type="chains" value="A=44-69"/>
</dbReference>
<dbReference type="PDB" id="6O4M">
    <property type="method" value="X-ray"/>
    <property type="resolution" value="1.27 A"/>
    <property type="chains" value="A/B/C/D=44-69"/>
</dbReference>
<dbReference type="PDB" id="8AHS">
    <property type="method" value="X-ray"/>
    <property type="resolution" value="2.48 A"/>
    <property type="chains" value="C=44-69"/>
</dbReference>
<dbReference type="PDB" id="8AHT">
    <property type="method" value="X-ray"/>
    <property type="resolution" value="2.20 A"/>
    <property type="chains" value="F/G/H/I=44-69"/>
</dbReference>
<dbReference type="PDBsum" id="1BH1"/>
<dbReference type="PDBsum" id="2MLT"/>
<dbReference type="PDBsum" id="2MW6"/>
<dbReference type="PDBsum" id="3QRX"/>
<dbReference type="PDBsum" id="6DST"/>
<dbReference type="PDBsum" id="6O4M"/>
<dbReference type="PDBsum" id="8AHS"/>
<dbReference type="PDBsum" id="8AHT"/>
<dbReference type="BMRB" id="P01501"/>
<dbReference type="SMR" id="P01501"/>
<dbReference type="BioGRID" id="1455502">
    <property type="interactions" value="1"/>
</dbReference>
<dbReference type="DIP" id="DIP-48928N"/>
<dbReference type="STRING" id="7460.P01501"/>
<dbReference type="ChEMBL" id="CHEMBL3351188"/>
<dbReference type="Allergome" id="3091">
    <property type="allergen name" value="Api m 4.0101"/>
</dbReference>
<dbReference type="Allergome" id="48">
    <property type="allergen name" value="Api m 4"/>
</dbReference>
<dbReference type="TCDB" id="1.C.18.1.1">
    <property type="family name" value="the melittin (melittin) family"/>
</dbReference>
<dbReference type="PaxDb" id="7460-GB44112-PA"/>
<dbReference type="EnsemblMetazoa" id="NM_001011607">
    <property type="protein sequence ID" value="NP_001011607"/>
    <property type="gene ID" value="GeneID_406130"/>
</dbReference>
<dbReference type="GeneID" id="406130"/>
<dbReference type="KEGG" id="ame:406130"/>
<dbReference type="CTD" id="38785"/>
<dbReference type="HOGENOM" id="CLU_2759907_0_0_1"/>
<dbReference type="InParanoid" id="P01501"/>
<dbReference type="EvolutionaryTrace" id="P01501"/>
<dbReference type="Proteomes" id="UP000005203">
    <property type="component" value="Linkage group LG4"/>
</dbReference>
<dbReference type="GO" id="GO:0005576">
    <property type="term" value="C:extracellular region"/>
    <property type="evidence" value="ECO:0007669"/>
    <property type="project" value="UniProtKB-SubCell"/>
</dbReference>
<dbReference type="GO" id="GO:0044218">
    <property type="term" value="C:other organism cell membrane"/>
    <property type="evidence" value="ECO:0007669"/>
    <property type="project" value="UniProtKB-KW"/>
</dbReference>
<dbReference type="GO" id="GO:0046930">
    <property type="term" value="C:pore complex"/>
    <property type="evidence" value="ECO:0007669"/>
    <property type="project" value="UniProtKB-KW"/>
</dbReference>
<dbReference type="GO" id="GO:0008289">
    <property type="term" value="F:lipid binding"/>
    <property type="evidence" value="ECO:0000314"/>
    <property type="project" value="DisProt"/>
</dbReference>
<dbReference type="GO" id="GO:0140678">
    <property type="term" value="F:molecular function inhibitor activity"/>
    <property type="evidence" value="ECO:0000270"/>
    <property type="project" value="DisProt"/>
</dbReference>
<dbReference type="GO" id="GO:0015288">
    <property type="term" value="F:porin activity"/>
    <property type="evidence" value="ECO:0007669"/>
    <property type="project" value="UniProtKB-KW"/>
</dbReference>
<dbReference type="GO" id="GO:0004860">
    <property type="term" value="F:protein kinase inhibitor activity"/>
    <property type="evidence" value="ECO:0007669"/>
    <property type="project" value="InterPro"/>
</dbReference>
<dbReference type="GO" id="GO:0090729">
    <property type="term" value="F:toxin activity"/>
    <property type="evidence" value="ECO:0007669"/>
    <property type="project" value="UniProtKB-KW"/>
</dbReference>
<dbReference type="GO" id="GO:0031640">
    <property type="term" value="P:killing of cells of another organism"/>
    <property type="evidence" value="ECO:0007669"/>
    <property type="project" value="UniProtKB-KW"/>
</dbReference>
<dbReference type="GO" id="GO:0006811">
    <property type="term" value="P:monoatomic ion transport"/>
    <property type="evidence" value="ECO:0007669"/>
    <property type="project" value="UniProtKB-KW"/>
</dbReference>
<dbReference type="DisProt" id="DP02951"/>
<dbReference type="InterPro" id="IPR002116">
    <property type="entry name" value="Melittin/Api_allergen"/>
</dbReference>
<dbReference type="Pfam" id="PF01372">
    <property type="entry name" value="Melittin"/>
    <property type="match status" value="1"/>
</dbReference>
<name>MEL_APIME</name>
<feature type="signal peptide" evidence="1">
    <location>
        <begin position="1"/>
        <end position="21"/>
    </location>
</feature>
<feature type="propeptide" id="PRO_0000035148" description="Removed by a dipeptidylpeptidase" evidence="26 27 31">
    <location>
        <begin position="22"/>
        <end position="43"/>
    </location>
</feature>
<feature type="peptide" id="PRO_0000035149" description="Melittin" evidence="3 4 17">
    <location>
        <begin position="44"/>
        <end position="69"/>
    </location>
</feature>
<feature type="site" description="Important for the flexibility at the center of the helix, flexibility that is important for the stability of the voltage-gated pore" evidence="5">
    <location>
        <position position="57"/>
    </location>
</feature>
<feature type="modified residue" description="N-formylglycine; partial" evidence="16">
    <location>
        <position position="44"/>
    </location>
</feature>
<feature type="modified residue" description="Glutamine amide" evidence="17">
    <location>
        <position position="69"/>
    </location>
</feature>
<feature type="sequence variant" description="In melittin-S.">
    <original>T</original>
    <variation>S</variation>
    <location>
        <position position="53"/>
    </location>
</feature>
<feature type="sequence variant" description="In melittin-2; possibly an artifact.">
    <original>K</original>
    <variation>S</variation>
    <location>
        <position position="64"/>
    </location>
</feature>
<feature type="sequence variant" description="In melittin-2; possibly an artifact.">
    <original>K</original>
    <variation>KK</variation>
    <location>
        <position position="66"/>
    </location>
</feature>
<feature type="mutagenesis site" description="Very important decrease of hemolytic activity and capacity of lowering the surface tension of aqueous solutions." evidence="15">
    <location>
        <begin position="44"/>
        <end position="57"/>
    </location>
</feature>
<feature type="mutagenesis site" description="In MelP5; increase in size of pores (10-12 monomers) that form at lower concentrations of the toxin; when associated with 65--A--L-69." evidence="8">
    <original>T</original>
    <variation>A</variation>
    <location>
        <position position="53"/>
    </location>
</feature>
<feature type="mutagenesis site" description="Loss of flexibility in the center of the helix, is twice as effective as melittin as a hemolytic agent but has very poor voltage-gated pore activity in planar bilayers and voltage-dependent ion conductionce is supported only at very high ionic strengths." evidence="5">
    <original>P</original>
    <variation>A</variation>
    <location>
        <position position="57"/>
    </location>
</feature>
<feature type="mutagenesis site" description="In MelP5; increase in size of pores (10-12 monomers) that form at lower concentrations of the toxin; when associated with 65--A--L-69." evidence="8">
    <original>RKRQQ</original>
    <variation>AAQQL</variation>
    <location>
        <begin position="65"/>
        <end position="69"/>
    </location>
</feature>
<feature type="helix" evidence="32">
    <location>
        <begin position="45"/>
        <end position="54"/>
    </location>
</feature>
<feature type="helix" evidence="32">
    <location>
        <begin position="56"/>
        <end position="61"/>
    </location>
</feature>
<feature type="helix" evidence="32">
    <location>
        <begin position="64"/>
        <end position="68"/>
    </location>
</feature>
<reference key="1">
    <citation type="journal article" date="1983" name="Eur. J. Biochem.">
        <title>Nucleotide sequence of cloned cDNA coding for honeybee prepromelittin.</title>
        <authorList>
            <person name="Vlasak R."/>
            <person name="Unger-Ullmann C."/>
            <person name="Kreil G."/>
            <person name="Frischauf A.-M."/>
        </authorList>
    </citation>
    <scope>NUCLEOTIDE SEQUENCE [MRNA]</scope>
</reference>
<reference key="2">
    <citation type="submission" date="2012-04" db="EMBL/GenBank/DDBJ databases">
        <authorList>
            <person name="Hou C.-S."/>
            <person name="Guo L.-Q."/>
            <person name="Wang J.-R."/>
            <person name="You L.-F."/>
            <person name="Lin J.-F."/>
            <person name="Wu W.-H."/>
            <person name="Wang C.-S."/>
            <person name="Wang T."/>
        </authorList>
    </citation>
    <scope>NUCLEOTIDE SEQUENCE [MRNA]</scope>
</reference>
<reference key="3">
    <citation type="journal article" date="1967" name="Hoppe-Seyler's Z. Physiol. Chem.">
        <title>Sequence analysis of melittin from tryptic and peptic degradation products.</title>
        <authorList>
            <person name="Habermann E."/>
            <person name="Jentsch J."/>
        </authorList>
    </citation>
    <scope>PROTEIN SEQUENCE OF 44-69 (MELITTIN AND MELITTIN-2)</scope>
    <scope>AMIDATION AT GLN-69</scope>
    <scope>SUBCELLULAR LOCATION</scope>
</reference>
<reference key="4">
    <citation type="journal article" date="2010" name="Peptides">
        <title>Identification of a novel melittin isoform from Africanized Apis mellifera venom.</title>
        <authorList>
            <person name="Sciani J.M."/>
            <person name="Marques-Porto R."/>
            <person name="Lourenco A. Jr."/>
            <person name="Orsi R.D."/>
            <person name="Junior R.S."/>
            <person name="Barraviera B."/>
            <person name="Pimenta D.C."/>
        </authorList>
    </citation>
    <scope>PROTEIN SEQUENCE OF 44-69 (MELITTIN-S)</scope>
    <scope>FUNCTION</scope>
    <scope>IDENTIFICATION BY MASS SPECTROMETRY</scope>
    <scope>SEASONAL VARIATION</scope>
    <scope>3D-STRUCTURE MODELING</scope>
    <scope>SUBCELLULAR LOCATION</scope>
    <source>
        <strain>Africanized honey bee</strain>
        <tissue>Venom</tissue>
    </source>
</reference>
<reference key="5">
    <citation type="journal article" date="2010" name="Toxicon">
        <title>Africanized honey bee (Apis mellifera) venom profiling: Seasonal variation of melittin and phospholipase A(2) levels.</title>
        <authorList>
            <person name="Ferreira Junior R.S."/>
            <person name="Sciani J.M."/>
            <person name="Marques-Porto R."/>
            <person name="Junior A.L."/>
            <person name="Orsi R.D."/>
            <person name="Barraviera B."/>
            <person name="Pimenta D.C."/>
        </authorList>
    </citation>
    <scope>PROTEIN SEQUENCE OF 44-69 (MELITTIN)</scope>
    <scope>IDENTIFICATION BY MASS SPECTROMETRY</scope>
    <scope>SEASONAL VARIATION</scope>
    <scope>SUBCELLULAR LOCATION</scope>
    <source>
        <strain>Africanized honey bee</strain>
        <tissue>Venom</tissue>
    </source>
</reference>
<reference key="6">
    <citation type="journal article" date="1974" name="FEBS Lett.">
        <title>Enhancement of bee venom phospholipase A2 activity by melittin, direct lytic factor from cobra venom and polymyxin B.</title>
        <authorList>
            <person name="Mollay C."/>
            <person name="Kreil G."/>
        </authorList>
    </citation>
    <scope>FUNCTION ON PHOSPHOLIPASE A2</scope>
</reference>
<reference key="7">
    <citation type="journal article" date="1969" name="J. Biol. Chem.">
        <title>Interaction of a lytic polypeptide, melittin, with lipid membrane systems.</title>
        <authorList>
            <person name="Sessa G."/>
            <person name="Freer J.H."/>
            <person name="Colacicco G."/>
            <person name="Weissmann G."/>
        </authorList>
    </citation>
    <scope>FUNCTION</scope>
</reference>
<reference key="8">
    <citation type="journal article" date="1971" name="Experientia">
        <title>Haemolytic activity and action on the surface tension of aqueous solutions of synthetic melittins and their derivatives.</title>
        <authorList>
            <person name="Schroeder E."/>
            <person name="Luebke K."/>
            <person name="Lehmann M."/>
            <person name="Beetz I."/>
        </authorList>
    </citation>
    <scope>SYNTHESIS OF 44-69 (MELITTIN AND MELITTIN-2)</scope>
    <scope>FUNCTION</scope>
    <scope>MUTAGENESIS OF 44-GLY--PRO-57</scope>
</reference>
<reference key="9">
    <citation type="journal article" date="1971" name="Experientia">
        <title>Isolation and structure of N 1-formyl melittin.</title>
        <authorList>
            <person name="Luebke K."/>
            <person name="Matthes S."/>
            <person name="Kloss G."/>
        </authorList>
    </citation>
    <scope>SYNTHESIS OF 44-69</scope>
    <scope>FORMYLATION AT GLY-44</scope>
</reference>
<reference key="10">
    <citation type="journal article" date="1977" name="J. Allergy Clin. Immunol.">
        <title>Melittin: an allergen of honeybee venom.</title>
        <authorList>
            <person name="Paull B.R."/>
            <person name="Yunginger J.W."/>
            <person name="Gleich G.J."/>
        </authorList>
    </citation>
    <scope>ALLERGEN</scope>
</reference>
<reference key="11">
    <citation type="journal article" date="1979" name="FEBS Lett.">
        <title>The self-association of melittin and its binding to lipids: an intrinsic fluorescence polarization study.</title>
        <authorList>
            <person name="Faucon J.F."/>
            <person name="Dufourcq J."/>
            <person name="Lussan C."/>
        </authorList>
    </citation>
    <scope>SUBUNIT</scope>
</reference>
<reference key="12">
    <citation type="journal article" date="1980" name="Biochim. Biophys. Acta">
        <title>High-resolution 1H-NMR studies of monomeric melittin in aqueous solution.</title>
        <authorList>
            <person name="Lauterwein J."/>
            <person name="Brown L.R."/>
            <person name="Wuethrich K."/>
        </authorList>
    </citation>
    <scope>SUBUNIT</scope>
</reference>
<reference key="13">
    <citation type="journal article" date="1981" name="Biophys. J.">
        <title>The sting. Melittin forms channels in lipid bilayers.</title>
        <authorList>
            <person name="Tosteson M.T."/>
            <person name="Tosteson D.C."/>
        </authorList>
    </citation>
    <scope>FUNCTION</scope>
    <scope>SUBUNIT</scope>
</reference>
<reference key="14">
    <citation type="journal article" date="1982" name="J. Biol. Chem.">
        <title>Voltage-dependent trans-bilayer orientation of melittin.</title>
        <authorList>
            <person name="Kempf C."/>
            <person name="Klausner R.D."/>
            <person name="Weinstein J.N."/>
            <person name="Van Renswoude J."/>
            <person name="Pincus M."/>
            <person name="Blumenthal R."/>
        </authorList>
    </citation>
    <scope>FUNCTION</scope>
</reference>
<reference key="15">
    <citation type="journal article" date="1983" name="Biochim. Biophys. Acta">
        <title>Lytic activity of monomeric and oligomeric melittin.</title>
        <authorList>
            <person name="Hider R.C."/>
            <person name="Khader F."/>
            <person name="Tatham A.S."/>
        </authorList>
    </citation>
    <scope>SUBUNIT</scope>
    <scope>FUNCTION AS MONOMER</scope>
</reference>
<reference key="16">
    <citation type="journal article" date="1985" name="J. Membr. Biol.">
        <title>Melittin lysis of red cells.</title>
        <authorList>
            <person name="Tosteson M.T."/>
            <person name="Holmes S.J."/>
            <person name="Razin M."/>
            <person name="Tosteson D.C."/>
        </authorList>
    </citation>
    <scope>FUNCTION</scope>
</reference>
<reference key="17">
    <citation type="journal article" date="1987" name="Eur. Biophys. J.">
        <title>Different states of self-association of melittin in phospholipid bilayers. A resonance energy transfer approach.</title>
        <authorList>
            <person name="Talbot J.C."/>
            <person name="Faucon J.F."/>
            <person name="Dufourcq J."/>
        </authorList>
    </citation>
    <scope>FUNCTION</scope>
</reference>
<reference key="18">
    <citation type="journal article" date="1987" name="FEBS Lett.">
        <title>Interaction of melittin with negatively charged phospholipids: consequences for lipid organization.</title>
        <authorList>
            <person name="Batenburg A.M."/>
            <person name="van Esch J.H."/>
            <person name="Leunissen-Bijvelt J."/>
            <person name="Verkleij A.J."/>
            <person name="de Kruijff B."/>
        </authorList>
    </citation>
    <scope>FUNCTION</scope>
</reference>
<reference key="19">
    <citation type="journal article" date="2000" name="Toxicon">
        <title>Isolation and structures of grammistins, peptide toxins from the skin secretion of the soapfish Grammistes sexlineatus.</title>
        <authorList>
            <person name="Shiomi K."/>
            <person name="Igarashi T."/>
            <person name="Yokota H."/>
            <person name="Nagashima Y."/>
            <person name="Ishida M."/>
        </authorList>
    </citation>
    <scope>TOXIC DOSE</scope>
</reference>
<reference key="20">
    <citation type="journal article" date="2001" name="Biophys. J.">
        <title>Barrel-stave model or toroidal model? A case study on melittin pores.</title>
        <authorList>
            <person name="Yang L."/>
            <person name="Harroun T.A."/>
            <person name="Weiss T.M."/>
            <person name="Ding L."/>
            <person name="Huang H.W."/>
        </authorList>
    </citation>
    <scope>SUBUNIT</scope>
</reference>
<reference key="21">
    <citation type="journal article" date="2014" name="Peptides">
        <title>Functional characterization of naturally occurring melittin peptide isoforms in two honey bee species, Apis mellifera and Apis cerana.</title>
        <authorList>
            <person name="Park D."/>
            <person name="Jung J.W."/>
            <person name="Lee M.O."/>
            <person name="Lee S.Y."/>
            <person name="Kim B."/>
            <person name="Jin H.J."/>
            <person name="Kim J."/>
            <person name="Ahn Y.J."/>
            <person name="Lee K.W."/>
            <person name="Song Y.S."/>
            <person name="Hong S."/>
            <person name="Womack J.E."/>
            <person name="Kwon H.W."/>
        </authorList>
    </citation>
    <scope>SYNTHESIS OF 44-69</scope>
    <scope>FUNCTION</scope>
</reference>
<reference key="22">
    <citation type="journal article" date="2017" name="Biochim. Biophys. Acta">
        <title>Single channel planar lipid bilayer recordings of the melittin variant MelP5.</title>
        <authorList>
            <person name="Fennouri A."/>
            <person name="Mayer S.F."/>
            <person name="Schroeder T.B.H."/>
            <person name="Mayer M."/>
        </authorList>
    </citation>
    <scope>SYNTHESIS</scope>
    <scope>MUTAGENESIS OF THR-53 AND 65-ARG--GLN-69</scope>
</reference>
<reference key="23">
    <citation type="journal article" date="1990" name="Biochim. Biophys. Acta">
        <title>The actions of melittin on membranes.</title>
        <authorList>
            <person name="Dempsey C.E."/>
        </authorList>
    </citation>
    <scope>REVIEW</scope>
    <scope>MUTAGENESIS OF PRO-57</scope>
</reference>
<reference key="24">
    <citation type="journal article" date="2016" name="Neurosci. Bull.">
        <title>Melittin, the major pain-producing substance of bee venom.</title>
        <authorList>
            <person name="Chen J."/>
            <person name="Guan S.M."/>
            <person name="Sun W."/>
            <person name="Fu H."/>
        </authorList>
    </citation>
    <scope>REVIEW</scope>
    <scope>FUNCTION AS A PAIN PRODUCING SUBSTANCE</scope>
</reference>
<reference key="25">
    <citation type="journal article" date="2017" name="Cancer Lett.">
        <title>Melittin, a major peptide component of bee venom, and its conjugates in cancer therapy.</title>
        <authorList>
            <person name="Rady I."/>
            <person name="Siddiqui I.A."/>
            <person name="Rady M."/>
            <person name="Mukhtar H."/>
        </authorList>
    </citation>
    <scope>REVIEW</scope>
    <scope>PHARMACEUTICAL</scope>
</reference>
<reference key="26">
    <citation type="journal article" date="2022" name="Toxins">
        <title>The pharmacological potential of novel melittin variants from the honeybee and solitary bees against inflammation and cancer.</title>
        <authorList>
            <person name="Erkoc P."/>
            <person name="von Reumont B.M."/>
            <person name="Lueddecke T."/>
            <person name="Henke M."/>
            <person name="Ulshoefer T."/>
            <person name="Vilcinskas A."/>
            <person name="Fuerst R."/>
            <person name="Schiffmann S."/>
        </authorList>
    </citation>
    <scope>FUNCTION</scope>
</reference>
<reference key="27">
    <citation type="journal article" date="1982" name="J. Biol. Chem.">
        <title>The structure of melittin. II. Interpretation of the structure.</title>
        <authorList>
            <person name="Terwilliger T.C."/>
            <person name="Eisenberg D."/>
        </authorList>
    </citation>
    <scope>X-RAY CRYSTALLOGRAPHY (2.0 ANGSTROMS) OF 44-69</scope>
</reference>
<reference key="28">
    <citation type="submission" date="1998-06" db="PDB data bank">
        <authorList>
            <person name="Barnham K.J."/>
            <person name="Hewish D."/>
            <person name="Werkmeister J."/>
            <person name="Curtain C."/>
            <person name="Kirkpatrick A."/>
            <person name="Bartone N."/>
            <person name="Norton R."/>
            <person name="Rivett D."/>
        </authorList>
    </citation>
    <scope>STRUCTURE BY NMR OF 44-69</scope>
</reference>
<keyword id="KW-0002">3D-structure</keyword>
<keyword id="KW-0020">Allergen</keyword>
<keyword id="KW-0027">Amidation</keyword>
<keyword id="KW-0929">Antimicrobial</keyword>
<keyword id="KW-0204">Cytolysis</keyword>
<keyword id="KW-0903">Direct protein sequencing</keyword>
<keyword id="KW-0291">Formylation</keyword>
<keyword id="KW-0354">Hemolysis</keyword>
<keyword id="KW-0406">Ion transport</keyword>
<keyword id="KW-0472">Membrane</keyword>
<keyword id="KW-0582">Pharmaceutical</keyword>
<keyword id="KW-0626">Porin</keyword>
<keyword id="KW-1185">Reference proteome</keyword>
<keyword id="KW-0964">Secreted</keyword>
<keyword id="KW-0732">Signal</keyword>
<keyword id="KW-1052">Target cell membrane</keyword>
<keyword id="KW-1053">Target membrane</keyword>
<keyword id="KW-0800">Toxin</keyword>
<keyword id="KW-0812">Transmembrane</keyword>
<keyword id="KW-0813">Transport</keyword>